<keyword id="KW-0963">Cytoplasm</keyword>
<keyword id="KW-0444">Lipid biosynthesis</keyword>
<keyword id="KW-0443">Lipid metabolism</keyword>
<keyword id="KW-0594">Phospholipid biosynthesis</keyword>
<keyword id="KW-1208">Phospholipid metabolism</keyword>
<keyword id="KW-0808">Transferase</keyword>
<feature type="chain" id="PRO_0000329259" description="Phosphate acyltransferase">
    <location>
        <begin position="1"/>
        <end position="368"/>
    </location>
</feature>
<name>PLSX_CERS5</name>
<proteinExistence type="inferred from homology"/>
<accession>A4WTT8</accession>
<dbReference type="EC" id="2.3.1.274" evidence="1"/>
<dbReference type="EMBL" id="CP000661">
    <property type="protein sequence ID" value="ABP70802.1"/>
    <property type="status" value="ALT_INIT"/>
    <property type="molecule type" value="Genomic_DNA"/>
</dbReference>
<dbReference type="SMR" id="A4WTT8"/>
<dbReference type="STRING" id="349102.Rsph17025_1911"/>
<dbReference type="KEGG" id="rsq:Rsph17025_1911"/>
<dbReference type="eggNOG" id="COG0416">
    <property type="taxonomic scope" value="Bacteria"/>
</dbReference>
<dbReference type="HOGENOM" id="CLU_039379_1_0_5"/>
<dbReference type="BioCyc" id="RSPH349102:G1G8M-1976-MONOMER"/>
<dbReference type="UniPathway" id="UPA00085"/>
<dbReference type="GO" id="GO:0005737">
    <property type="term" value="C:cytoplasm"/>
    <property type="evidence" value="ECO:0007669"/>
    <property type="project" value="UniProtKB-SubCell"/>
</dbReference>
<dbReference type="GO" id="GO:0043811">
    <property type="term" value="F:phosphate:acyl-[acyl carrier protein] acyltransferase activity"/>
    <property type="evidence" value="ECO:0007669"/>
    <property type="project" value="UniProtKB-UniRule"/>
</dbReference>
<dbReference type="GO" id="GO:0006633">
    <property type="term" value="P:fatty acid biosynthetic process"/>
    <property type="evidence" value="ECO:0007669"/>
    <property type="project" value="UniProtKB-UniRule"/>
</dbReference>
<dbReference type="GO" id="GO:0008654">
    <property type="term" value="P:phospholipid biosynthetic process"/>
    <property type="evidence" value="ECO:0007669"/>
    <property type="project" value="UniProtKB-KW"/>
</dbReference>
<dbReference type="Gene3D" id="3.40.718.10">
    <property type="entry name" value="Isopropylmalate Dehydrogenase"/>
    <property type="match status" value="1"/>
</dbReference>
<dbReference type="HAMAP" id="MF_00019">
    <property type="entry name" value="PlsX"/>
    <property type="match status" value="1"/>
</dbReference>
<dbReference type="InterPro" id="IPR003664">
    <property type="entry name" value="FA_synthesis"/>
</dbReference>
<dbReference type="InterPro" id="IPR012281">
    <property type="entry name" value="Phospholipid_synth_PlsX-like"/>
</dbReference>
<dbReference type="NCBIfam" id="TIGR00182">
    <property type="entry name" value="plsX"/>
    <property type="match status" value="1"/>
</dbReference>
<dbReference type="PANTHER" id="PTHR30100">
    <property type="entry name" value="FATTY ACID/PHOSPHOLIPID SYNTHESIS PROTEIN PLSX"/>
    <property type="match status" value="1"/>
</dbReference>
<dbReference type="PANTHER" id="PTHR30100:SF1">
    <property type="entry name" value="PHOSPHATE ACYLTRANSFERASE"/>
    <property type="match status" value="1"/>
</dbReference>
<dbReference type="Pfam" id="PF02504">
    <property type="entry name" value="FA_synthesis"/>
    <property type="match status" value="1"/>
</dbReference>
<dbReference type="PIRSF" id="PIRSF002465">
    <property type="entry name" value="Phsphlp_syn_PlsX"/>
    <property type="match status" value="1"/>
</dbReference>
<dbReference type="SUPFAM" id="SSF53659">
    <property type="entry name" value="Isocitrate/Isopropylmalate dehydrogenase-like"/>
    <property type="match status" value="1"/>
</dbReference>
<organism>
    <name type="scientific">Cereibacter sphaeroides (strain ATCC 17025 / ATH 2.4.3)</name>
    <name type="common">Rhodobacter sphaeroides</name>
    <dbReference type="NCBI Taxonomy" id="349102"/>
    <lineage>
        <taxon>Bacteria</taxon>
        <taxon>Pseudomonadati</taxon>
        <taxon>Pseudomonadota</taxon>
        <taxon>Alphaproteobacteria</taxon>
        <taxon>Rhodobacterales</taxon>
        <taxon>Paracoccaceae</taxon>
        <taxon>Cereibacter</taxon>
    </lineage>
</organism>
<protein>
    <recommendedName>
        <fullName evidence="1">Phosphate acyltransferase</fullName>
        <ecNumber evidence="1">2.3.1.274</ecNumber>
    </recommendedName>
    <alternativeName>
        <fullName evidence="1">Acyl-ACP phosphotransacylase</fullName>
    </alternativeName>
    <alternativeName>
        <fullName evidence="1">Acyl-[acyl-carrier-protein]--phosphate acyltransferase</fullName>
    </alternativeName>
    <alternativeName>
        <fullName evidence="1">Phosphate-acyl-ACP acyltransferase</fullName>
    </alternativeName>
</protein>
<evidence type="ECO:0000255" key="1">
    <source>
        <dbReference type="HAMAP-Rule" id="MF_00019"/>
    </source>
</evidence>
<evidence type="ECO:0000305" key="2"/>
<comment type="function">
    <text evidence="1">Catalyzes the reversible formation of acyl-phosphate (acyl-PO(4)) from acyl-[acyl-carrier-protein] (acyl-ACP). This enzyme utilizes acyl-ACP as fatty acyl donor, but not acyl-CoA.</text>
</comment>
<comment type="catalytic activity">
    <reaction evidence="1">
        <text>a fatty acyl-[ACP] + phosphate = an acyl phosphate + holo-[ACP]</text>
        <dbReference type="Rhea" id="RHEA:42292"/>
        <dbReference type="Rhea" id="RHEA-COMP:9685"/>
        <dbReference type="Rhea" id="RHEA-COMP:14125"/>
        <dbReference type="ChEBI" id="CHEBI:43474"/>
        <dbReference type="ChEBI" id="CHEBI:59918"/>
        <dbReference type="ChEBI" id="CHEBI:64479"/>
        <dbReference type="ChEBI" id="CHEBI:138651"/>
        <dbReference type="EC" id="2.3.1.274"/>
    </reaction>
</comment>
<comment type="pathway">
    <text evidence="1">Lipid metabolism; phospholipid metabolism.</text>
</comment>
<comment type="subunit">
    <text evidence="1">Homodimer. Probably interacts with PlsY.</text>
</comment>
<comment type="subcellular location">
    <subcellularLocation>
        <location evidence="1">Cytoplasm</location>
    </subcellularLocation>
    <text evidence="1">Associated with the membrane possibly through PlsY.</text>
</comment>
<comment type="similarity">
    <text evidence="1">Belongs to the PlsX family.</text>
</comment>
<comment type="sequence caution" evidence="2">
    <conflict type="erroneous initiation">
        <sequence resource="EMBL-CDS" id="ABP70802"/>
    </conflict>
</comment>
<gene>
    <name evidence="1" type="primary">plsX</name>
    <name type="ordered locus">Rsph17025_1911</name>
</gene>
<reference key="1">
    <citation type="submission" date="2007-04" db="EMBL/GenBank/DDBJ databases">
        <title>Complete sequence of chromosome of Rhodobacter sphaeroides ATCC 17025.</title>
        <authorList>
            <consortium name="US DOE Joint Genome Institute"/>
            <person name="Copeland A."/>
            <person name="Lucas S."/>
            <person name="Lapidus A."/>
            <person name="Barry K."/>
            <person name="Detter J.C."/>
            <person name="Glavina del Rio T."/>
            <person name="Hammon N."/>
            <person name="Israni S."/>
            <person name="Dalin E."/>
            <person name="Tice H."/>
            <person name="Pitluck S."/>
            <person name="Chertkov O."/>
            <person name="Brettin T."/>
            <person name="Bruce D."/>
            <person name="Han C."/>
            <person name="Schmutz J."/>
            <person name="Larimer F."/>
            <person name="Land M."/>
            <person name="Hauser L."/>
            <person name="Kyrpides N."/>
            <person name="Kim E."/>
            <person name="Richardson P."/>
            <person name="Mackenzie C."/>
            <person name="Choudhary M."/>
            <person name="Donohue T.J."/>
            <person name="Kaplan S."/>
        </authorList>
    </citation>
    <scope>NUCLEOTIDE SEQUENCE [LARGE SCALE GENOMIC DNA]</scope>
    <source>
        <strain>ATCC 17025 / ATH 2.4.3</strain>
    </source>
</reference>
<sequence>MASDTAPQATGAGRIVISVDAMGGDRGPAAVVAGIAGSASANPGAYFIVHGDEAQIGPMIAKRKDLRGRCEIRHAPRVVTMSDKPSQVMRHGEGTSMWSCIESVRAGEATVAVSCGNTGALMAVSMIRLRKLPGVNRPAIACLWPSRNPGGFNVMLDVGADIKADAEDLAQFALMGASYARNGLSLERPRVGLLNVGTEEHKGRAELKSAQDLISANAEAGAYEYVGFLEGGDIPGRRCDVIVTDGFTGNVALKTGEGTAKLISDFLRDAFGANVLSKMAAVLALGSLKRLQKRIDPRRVNGGVFLGLNGTVVKSHGSADATGVAAAIGLAVRLARSGFHERLAARLASAGRAGQDAPQDEVAAPRQI</sequence>